<sequence length="208" mass="23238">MTGKKRSASSSRWLQEHFSDKYVQQAQKKGLRSRAWFKLDEIQQSDKLFKPGMTVVDLGAAPGGWSQYVVTQIGGKGRIIACDLLPMDPIVGVDFLQGDFRDELVMKALLERVGDSKVQVVMSDMAPNMSGTPAVDIPRAMYLVELALEMCRDVLAPGGSFVVKVFQGEGFDEYLREIRSLFTKVKVRKPDSSRARSREVYIVATGRK</sequence>
<comment type="function">
    <text evidence="1">Specifically methylates the uridine in position 2552 of 23S rRNA at the 2'-O position of the ribose in the fully assembled 50S ribosomal subunit.</text>
</comment>
<comment type="catalytic activity">
    <reaction evidence="1">
        <text>uridine(2552) in 23S rRNA + S-adenosyl-L-methionine = 2'-O-methyluridine(2552) in 23S rRNA + S-adenosyl-L-homocysteine + H(+)</text>
        <dbReference type="Rhea" id="RHEA:42720"/>
        <dbReference type="Rhea" id="RHEA-COMP:10202"/>
        <dbReference type="Rhea" id="RHEA-COMP:10203"/>
        <dbReference type="ChEBI" id="CHEBI:15378"/>
        <dbReference type="ChEBI" id="CHEBI:57856"/>
        <dbReference type="ChEBI" id="CHEBI:59789"/>
        <dbReference type="ChEBI" id="CHEBI:65315"/>
        <dbReference type="ChEBI" id="CHEBI:74478"/>
        <dbReference type="EC" id="2.1.1.166"/>
    </reaction>
</comment>
<comment type="subcellular location">
    <subcellularLocation>
        <location evidence="1">Cytoplasm</location>
    </subcellularLocation>
</comment>
<comment type="similarity">
    <text evidence="1">Belongs to the class I-like SAM-binding methyltransferase superfamily. RNA methyltransferase RlmE family.</text>
</comment>
<name>RLME_SALNS</name>
<evidence type="ECO:0000255" key="1">
    <source>
        <dbReference type="HAMAP-Rule" id="MF_01547"/>
    </source>
</evidence>
<feature type="chain" id="PRO_1000195017" description="Ribosomal RNA large subunit methyltransferase E">
    <location>
        <begin position="1"/>
        <end position="208"/>
    </location>
</feature>
<feature type="active site" description="Proton acceptor" evidence="1">
    <location>
        <position position="164"/>
    </location>
</feature>
<feature type="binding site" evidence="1">
    <location>
        <position position="63"/>
    </location>
    <ligand>
        <name>S-adenosyl-L-methionine</name>
        <dbReference type="ChEBI" id="CHEBI:59789"/>
    </ligand>
</feature>
<feature type="binding site" evidence="1">
    <location>
        <position position="65"/>
    </location>
    <ligand>
        <name>S-adenosyl-L-methionine</name>
        <dbReference type="ChEBI" id="CHEBI:59789"/>
    </ligand>
</feature>
<feature type="binding site" evidence="1">
    <location>
        <position position="83"/>
    </location>
    <ligand>
        <name>S-adenosyl-L-methionine</name>
        <dbReference type="ChEBI" id="CHEBI:59789"/>
    </ligand>
</feature>
<feature type="binding site" evidence="1">
    <location>
        <position position="99"/>
    </location>
    <ligand>
        <name>S-adenosyl-L-methionine</name>
        <dbReference type="ChEBI" id="CHEBI:59789"/>
    </ligand>
</feature>
<feature type="binding site" evidence="1">
    <location>
        <position position="124"/>
    </location>
    <ligand>
        <name>S-adenosyl-L-methionine</name>
        <dbReference type="ChEBI" id="CHEBI:59789"/>
    </ligand>
</feature>
<reference key="1">
    <citation type="journal article" date="2011" name="J. Bacteriol.">
        <title>Comparative genomics of 28 Salmonella enterica isolates: evidence for CRISPR-mediated adaptive sublineage evolution.</title>
        <authorList>
            <person name="Fricke W.F."/>
            <person name="Mammel M.K."/>
            <person name="McDermott P.F."/>
            <person name="Tartera C."/>
            <person name="White D.G."/>
            <person name="Leclerc J.E."/>
            <person name="Ravel J."/>
            <person name="Cebula T.A."/>
        </authorList>
    </citation>
    <scope>NUCLEOTIDE SEQUENCE [LARGE SCALE GENOMIC DNA]</scope>
    <source>
        <strain>SL254</strain>
    </source>
</reference>
<protein>
    <recommendedName>
        <fullName evidence="1">Ribosomal RNA large subunit methyltransferase E</fullName>
        <ecNumber evidence="1">2.1.1.166</ecNumber>
    </recommendedName>
    <alternativeName>
        <fullName evidence="1">23S rRNA Um2552 methyltransferase</fullName>
    </alternativeName>
    <alternativeName>
        <fullName evidence="1">rRNA (uridine-2'-O-)-methyltransferase</fullName>
    </alternativeName>
</protein>
<keyword id="KW-0963">Cytoplasm</keyword>
<keyword id="KW-0489">Methyltransferase</keyword>
<keyword id="KW-0698">rRNA processing</keyword>
<keyword id="KW-0949">S-adenosyl-L-methionine</keyword>
<keyword id="KW-0808">Transferase</keyword>
<accession>B4T708</accession>
<proteinExistence type="inferred from homology"/>
<dbReference type="EC" id="2.1.1.166" evidence="1"/>
<dbReference type="EMBL" id="CP001113">
    <property type="protein sequence ID" value="ACF62008.1"/>
    <property type="molecule type" value="Genomic_DNA"/>
</dbReference>
<dbReference type="RefSeq" id="WP_000145974.1">
    <property type="nucleotide sequence ID" value="NZ_CCMR01000001.1"/>
</dbReference>
<dbReference type="SMR" id="B4T708"/>
<dbReference type="KEGG" id="see:SNSL254_A3556"/>
<dbReference type="HOGENOM" id="CLU_009422_4_0_6"/>
<dbReference type="Proteomes" id="UP000008824">
    <property type="component" value="Chromosome"/>
</dbReference>
<dbReference type="GO" id="GO:0005737">
    <property type="term" value="C:cytoplasm"/>
    <property type="evidence" value="ECO:0007669"/>
    <property type="project" value="UniProtKB-SubCell"/>
</dbReference>
<dbReference type="GO" id="GO:0008650">
    <property type="term" value="F:rRNA (uridine-2'-O-)-methyltransferase activity"/>
    <property type="evidence" value="ECO:0007669"/>
    <property type="project" value="UniProtKB-UniRule"/>
</dbReference>
<dbReference type="CDD" id="cd02440">
    <property type="entry name" value="AdoMet_MTases"/>
    <property type="match status" value="1"/>
</dbReference>
<dbReference type="FunFam" id="3.40.50.150:FF:000005">
    <property type="entry name" value="Ribosomal RNA large subunit methyltransferase E"/>
    <property type="match status" value="1"/>
</dbReference>
<dbReference type="Gene3D" id="3.40.50.150">
    <property type="entry name" value="Vaccinia Virus protein VP39"/>
    <property type="match status" value="1"/>
</dbReference>
<dbReference type="HAMAP" id="MF_01547">
    <property type="entry name" value="RNA_methyltr_E"/>
    <property type="match status" value="1"/>
</dbReference>
<dbReference type="InterPro" id="IPR050082">
    <property type="entry name" value="RNA_methyltr_RlmE"/>
</dbReference>
<dbReference type="InterPro" id="IPR002877">
    <property type="entry name" value="RNA_MeTrfase_FtsJ_dom"/>
</dbReference>
<dbReference type="InterPro" id="IPR015507">
    <property type="entry name" value="rRNA-MeTfrase_E"/>
</dbReference>
<dbReference type="InterPro" id="IPR004512">
    <property type="entry name" value="rRNA_MeTrfase_gammaproteobac"/>
</dbReference>
<dbReference type="InterPro" id="IPR029063">
    <property type="entry name" value="SAM-dependent_MTases_sf"/>
</dbReference>
<dbReference type="NCBIfam" id="NF008390">
    <property type="entry name" value="PRK11188.1"/>
    <property type="match status" value="1"/>
</dbReference>
<dbReference type="NCBIfam" id="TIGR00438">
    <property type="entry name" value="rrmJ"/>
    <property type="match status" value="1"/>
</dbReference>
<dbReference type="PANTHER" id="PTHR10920">
    <property type="entry name" value="RIBOSOMAL RNA METHYLTRANSFERASE"/>
    <property type="match status" value="1"/>
</dbReference>
<dbReference type="PANTHER" id="PTHR10920:SF18">
    <property type="entry name" value="RRNA METHYLTRANSFERASE 2, MITOCHONDRIAL"/>
    <property type="match status" value="1"/>
</dbReference>
<dbReference type="Pfam" id="PF01728">
    <property type="entry name" value="FtsJ"/>
    <property type="match status" value="1"/>
</dbReference>
<dbReference type="PIRSF" id="PIRSF005461">
    <property type="entry name" value="23S_rRNA_mtase"/>
    <property type="match status" value="1"/>
</dbReference>
<dbReference type="SUPFAM" id="SSF53335">
    <property type="entry name" value="S-adenosyl-L-methionine-dependent methyltransferases"/>
    <property type="match status" value="1"/>
</dbReference>
<organism>
    <name type="scientific">Salmonella newport (strain SL254)</name>
    <dbReference type="NCBI Taxonomy" id="423368"/>
    <lineage>
        <taxon>Bacteria</taxon>
        <taxon>Pseudomonadati</taxon>
        <taxon>Pseudomonadota</taxon>
        <taxon>Gammaproteobacteria</taxon>
        <taxon>Enterobacterales</taxon>
        <taxon>Enterobacteriaceae</taxon>
        <taxon>Salmonella</taxon>
    </lineage>
</organism>
<gene>
    <name evidence="1" type="primary">rlmE</name>
    <name evidence="1" type="synonym">ftsJ</name>
    <name evidence="1" type="synonym">rrmJ</name>
    <name type="ordered locus">SNSL254_A3556</name>
</gene>